<organism>
    <name type="scientific">Listeria welshimeri serovar 6b (strain ATCC 35897 / DSM 20650 / CCUG 15529 / CIP 8149 / NCTC 11857 / SLCC 5334 / V8)</name>
    <dbReference type="NCBI Taxonomy" id="386043"/>
    <lineage>
        <taxon>Bacteria</taxon>
        <taxon>Bacillati</taxon>
        <taxon>Bacillota</taxon>
        <taxon>Bacilli</taxon>
        <taxon>Bacillales</taxon>
        <taxon>Listeriaceae</taxon>
        <taxon>Listeria</taxon>
    </lineage>
</organism>
<sequence length="73" mass="8667">MNLETPSQENVNFMLTEITTKLKMVNVGVFENLELDSVDYNALIDIYQLIKRKSNFSPREMQLFAEELRRIRK</sequence>
<reference key="1">
    <citation type="journal article" date="2006" name="J. Bacteriol.">
        <title>Whole-genome sequence of Listeria welshimeri reveals common steps in genome reduction with Listeria innocua as compared to Listeria monocytogenes.</title>
        <authorList>
            <person name="Hain T."/>
            <person name="Steinweg C."/>
            <person name="Kuenne C.T."/>
            <person name="Billion A."/>
            <person name="Ghai R."/>
            <person name="Chatterjee S.S."/>
            <person name="Domann E."/>
            <person name="Kaerst U."/>
            <person name="Goesmann A."/>
            <person name="Bekel T."/>
            <person name="Bartels D."/>
            <person name="Kaiser O."/>
            <person name="Meyer F."/>
            <person name="Puehler A."/>
            <person name="Weisshaar B."/>
            <person name="Wehland J."/>
            <person name="Liang C."/>
            <person name="Dandekar T."/>
            <person name="Lampidis R."/>
            <person name="Kreft J."/>
            <person name="Goebel W."/>
            <person name="Chakraborty T."/>
        </authorList>
    </citation>
    <scope>NUCLEOTIDE SEQUENCE [LARGE SCALE GENOMIC DNA]</scope>
    <source>
        <strain>ATCC 35897 / DSM 20650 / CCUG 15529 / CIP 8149 / NCTC 11857 / SLCC 5334 / V8</strain>
    </source>
</reference>
<evidence type="ECO:0000255" key="1">
    <source>
        <dbReference type="HAMAP-Rule" id="MF_00829"/>
    </source>
</evidence>
<gene>
    <name type="ordered locus">lwe1727</name>
</gene>
<feature type="chain" id="PRO_0000291413" description="UPF0435 protein lwe1727">
    <location>
        <begin position="1"/>
        <end position="73"/>
    </location>
</feature>
<comment type="similarity">
    <text evidence="1">Belongs to the UPF0435 family.</text>
</comment>
<dbReference type="EMBL" id="AM263198">
    <property type="protein sequence ID" value="CAK21145.1"/>
    <property type="molecule type" value="Genomic_DNA"/>
</dbReference>
<dbReference type="RefSeq" id="WP_011702507.1">
    <property type="nucleotide sequence ID" value="NC_008555.1"/>
</dbReference>
<dbReference type="SMR" id="A0AJG3"/>
<dbReference type="STRING" id="386043.lwe1727"/>
<dbReference type="GeneID" id="61189626"/>
<dbReference type="KEGG" id="lwe:lwe1727"/>
<dbReference type="eggNOG" id="COG4840">
    <property type="taxonomic scope" value="Bacteria"/>
</dbReference>
<dbReference type="HOGENOM" id="CLU_199533_1_0_9"/>
<dbReference type="OrthoDB" id="2361695at2"/>
<dbReference type="Proteomes" id="UP000000779">
    <property type="component" value="Chromosome"/>
</dbReference>
<dbReference type="HAMAP" id="MF_00829">
    <property type="entry name" value="UPF0435"/>
    <property type="match status" value="1"/>
</dbReference>
<dbReference type="InterPro" id="IPR009507">
    <property type="entry name" value="UPF0435"/>
</dbReference>
<dbReference type="Pfam" id="PF06569">
    <property type="entry name" value="DUF1128"/>
    <property type="match status" value="1"/>
</dbReference>
<name>Y1727_LISW6</name>
<accession>A0AJG3</accession>
<proteinExistence type="inferred from homology"/>
<protein>
    <recommendedName>
        <fullName evidence="1">UPF0435 protein lwe1727</fullName>
    </recommendedName>
</protein>